<keyword id="KW-0227">DNA damage</keyword>
<keyword id="KW-0233">DNA recombination</keyword>
<keyword id="KW-0234">DNA repair</keyword>
<keyword id="KW-0235">DNA replication</keyword>
<keyword id="KW-0238">DNA-binding</keyword>
<keyword id="KW-0479">Metal-binding</keyword>
<keyword id="KW-0678">Repressor</keyword>
<keyword id="KW-1194">Viral DNA replication</keyword>
<keyword id="KW-0862">Zinc</keyword>
<dbReference type="EMBL" id="AF033318">
    <property type="protein sequence ID" value="AAB87484.1"/>
    <property type="molecule type" value="Genomic_DNA"/>
</dbReference>
<dbReference type="SMR" id="O21946"/>
<dbReference type="GO" id="GO:0046872">
    <property type="term" value="F:metal ion binding"/>
    <property type="evidence" value="ECO:0007669"/>
    <property type="project" value="UniProtKB-KW"/>
</dbReference>
<dbReference type="GO" id="GO:0003697">
    <property type="term" value="F:single-stranded DNA binding"/>
    <property type="evidence" value="ECO:0007669"/>
    <property type="project" value="InterPro"/>
</dbReference>
<dbReference type="GO" id="GO:0006310">
    <property type="term" value="P:DNA recombination"/>
    <property type="evidence" value="ECO:0007669"/>
    <property type="project" value="UniProtKB-KW"/>
</dbReference>
<dbReference type="GO" id="GO:0006281">
    <property type="term" value="P:DNA repair"/>
    <property type="evidence" value="ECO:0007669"/>
    <property type="project" value="UniProtKB-KW"/>
</dbReference>
<dbReference type="GO" id="GO:0006260">
    <property type="term" value="P:DNA replication"/>
    <property type="evidence" value="ECO:0007669"/>
    <property type="project" value="UniProtKB-KW"/>
</dbReference>
<dbReference type="GO" id="GO:0039693">
    <property type="term" value="P:viral DNA genome replication"/>
    <property type="evidence" value="ECO:0007669"/>
    <property type="project" value="UniProtKB-KW"/>
</dbReference>
<dbReference type="Gene3D" id="3.90.198.10">
    <property type="entry name" value="Replication Fork Single-Stranded Dna Binding Protein"/>
    <property type="match status" value="1"/>
</dbReference>
<dbReference type="InterPro" id="IPR012340">
    <property type="entry name" value="NA-bd_OB-fold"/>
</dbReference>
<dbReference type="InterPro" id="IPR012339">
    <property type="entry name" value="Phage_T4_Gp32_ssDNA-bd"/>
</dbReference>
<dbReference type="InterPro" id="IPR044947">
    <property type="entry name" value="Phage_T4_Gp32_ssDNA-bd_sf"/>
</dbReference>
<dbReference type="Pfam" id="PF08804">
    <property type="entry name" value="gp32"/>
    <property type="match status" value="1"/>
</dbReference>
<dbReference type="SUPFAM" id="SSF50249">
    <property type="entry name" value="Nucleic acid-binding proteins"/>
    <property type="match status" value="1"/>
</dbReference>
<evidence type="ECO:0000250" key="1">
    <source>
        <dbReference type="UniProtKB" id="P03695"/>
    </source>
</evidence>
<evidence type="ECO:0000305" key="2"/>
<comment type="function">
    <text evidence="1">Single-stranded DNA-binding protein that participates in viral DNA replication, recombination, and repair. Coats the lagging-strand ssDNA as the replication fork advances. Stimulates the activities of viral DNA polymerase and DnaB-like SF4 replicative helicase, probably via its interaction with the helicase assembly factor. Together with DnaB-like SF4 replicative helicase and the helicase assembly factor, promotes pairing of two homologous DNA molecules containing complementary single-stranded regions and mediates homologous DNA strand exchange. Also promotes the formation of joint molecules. mRNA specific autogenous translational repressor.</text>
</comment>
<comment type="subunit">
    <text evidence="1">Homodimer in the absence of DNA, monomer when binding DNA. Interacts with the DNA helicase assembly protein; a ternary complex between the helicase assembly protein, the single-stranded DNA-binding protein and ssDNA is an obligatory intermediate in the helicase loading mechanism. Part of the replicase complex that includes the DNA polymerase, the polymerase clamp, the clamp loader complex, the single-stranded DNA binding protein, the primase, the DnaB-like SF4 replicative helicase and the helicase assembly factor. Interacts (via C-terminus) with the viral SF1 dDA helicase. Interacts with the viral SF2 UvsW repair helicase.</text>
</comment>
<comment type="domain">
    <text evidence="1">The acidic C-terminus is involved in modulating the ssDNA binding properties. The N-terminus LAST motif is involved in the cooperative binding of the protein to ssDNA.</text>
</comment>
<comment type="similarity">
    <text evidence="2">Belongs to the Tequatrovirus single-stranded DNA-binding protein family.</text>
</comment>
<organism>
    <name type="scientific">Escherichia phage SV14</name>
    <name type="common">Bacteriophage SV14</name>
    <dbReference type="NCBI Taxonomy" id="47488"/>
    <lineage>
        <taxon>Viruses</taxon>
        <taxon>Duplodnaviria</taxon>
        <taxon>Heunggongvirae</taxon>
        <taxon>Uroviricota</taxon>
        <taxon>Caudoviricetes</taxon>
        <taxon>Straboviridae</taxon>
        <taxon>Tevenvirinae</taxon>
        <taxon>Tequatrovirus</taxon>
    </lineage>
</organism>
<feature type="chain" id="PRO_0000165064" description="Single-stranded DNA-binding protein">
    <location>
        <begin position="1"/>
        <end position="113" status="greater than"/>
    </location>
</feature>
<feature type="region of interest" description="LAST" evidence="1">
    <location>
        <begin position="3"/>
        <end position="7"/>
    </location>
</feature>
<feature type="binding site" evidence="1">
    <location>
        <position position="65"/>
    </location>
    <ligand>
        <name>Zn(2+)</name>
        <dbReference type="ChEBI" id="CHEBI:29105"/>
    </ligand>
</feature>
<feature type="binding site" evidence="1">
    <location>
        <position position="78"/>
    </location>
    <ligand>
        <name>Zn(2+)</name>
        <dbReference type="ChEBI" id="CHEBI:29105"/>
    </ligand>
</feature>
<feature type="binding site" evidence="1">
    <location>
        <position position="88"/>
    </location>
    <ligand>
        <name>Zn(2+)</name>
        <dbReference type="ChEBI" id="CHEBI:29105"/>
    </ligand>
</feature>
<feature type="binding site" evidence="1">
    <location>
        <position position="91"/>
    </location>
    <ligand>
        <name>Zn(2+)</name>
        <dbReference type="ChEBI" id="CHEBI:29105"/>
    </ligand>
</feature>
<feature type="non-terminal residue">
    <location>
        <position position="113"/>
    </location>
</feature>
<organismHost>
    <name type="scientific">Enterobacteriaceae</name>
    <dbReference type="NCBI Taxonomy" id="543"/>
</organismHost>
<gene>
    <name type="primary">32</name>
    <name type="synonym">ssb</name>
</gene>
<reference key="1">
    <citation type="submission" date="1997-11" db="EMBL/GenBank/DDBJ databases">
        <authorList>
            <person name="Theimer C.A."/>
            <person name="Krisch H.M."/>
            <person name="Giedroc D.P."/>
        </authorList>
    </citation>
    <scope>NUCLEOTIDE SEQUENCE [GENOMIC DNA]</scope>
</reference>
<accession>O21946</accession>
<name>SSB_BPS14</name>
<protein>
    <recommendedName>
        <fullName>Single-stranded DNA-binding protein</fullName>
        <shortName>SSB protein</shortName>
    </recommendedName>
    <alternativeName>
        <fullName>Gp32</fullName>
    </alternativeName>
    <alternativeName>
        <fullName>Helix-destabilizing protein</fullName>
    </alternativeName>
</protein>
<proteinExistence type="inferred from homology"/>
<sequence length="113" mass="12669">MFKRKSTAELAAQMAKLAGNKGGFSSEDKGEWKLKLDNAGNGQAVIRFLPSKNDEQAPFAILVNHGFKKNGKWYIENCSSTHGDYDSCPVCQYISKNDLYNTDNKEYGLVKRK</sequence>